<name>GATZ_ECOUT</name>
<accession>Q1R9X8</accession>
<comment type="function">
    <text evidence="1">Component of the tagatose-1,6-bisphosphate aldolase GatYZ that is required for full activity and stability of the Y subunit. Could have a chaperone-like function for the proper and stable folding of GatY. When expressed alone, GatZ does not show any aldolase activity. Is involved in the catabolism of galactitol.</text>
</comment>
<comment type="pathway">
    <text evidence="1">Carbohydrate metabolism; D-tagatose 6-phosphate degradation; D-glyceraldehyde 3-phosphate and glycerone phosphate from D-tagatose 6-phosphate: step 2/2.</text>
</comment>
<comment type="subunit">
    <text evidence="1">Forms a complex with GatY.</text>
</comment>
<comment type="similarity">
    <text evidence="1">Belongs to the GatZ/KbaZ family. GatZ subfamily.</text>
</comment>
<evidence type="ECO:0000255" key="1">
    <source>
        <dbReference type="HAMAP-Rule" id="MF_01296"/>
    </source>
</evidence>
<dbReference type="EMBL" id="CP000243">
    <property type="protein sequence ID" value="ABE07836.1"/>
    <property type="molecule type" value="Genomic_DNA"/>
</dbReference>
<dbReference type="RefSeq" id="WP_000853836.1">
    <property type="nucleotide sequence ID" value="NZ_CP064825.1"/>
</dbReference>
<dbReference type="SMR" id="Q1R9X8"/>
<dbReference type="KEGG" id="eci:UTI89_C2368"/>
<dbReference type="HOGENOM" id="CLU_053334_0_0_6"/>
<dbReference type="UniPathway" id="UPA00704">
    <property type="reaction ID" value="UER00716"/>
</dbReference>
<dbReference type="Proteomes" id="UP000001952">
    <property type="component" value="Chromosome"/>
</dbReference>
<dbReference type="GO" id="GO:0005886">
    <property type="term" value="C:plasma membrane"/>
    <property type="evidence" value="ECO:0007669"/>
    <property type="project" value="TreeGrafter"/>
</dbReference>
<dbReference type="GO" id="GO:2001059">
    <property type="term" value="P:D-tagatose 6-phosphate catabolic process"/>
    <property type="evidence" value="ECO:0007669"/>
    <property type="project" value="UniProtKB-UniRule"/>
</dbReference>
<dbReference type="GO" id="GO:0019402">
    <property type="term" value="P:galactitol metabolic process"/>
    <property type="evidence" value="ECO:0007669"/>
    <property type="project" value="UniProtKB-KW"/>
</dbReference>
<dbReference type="GO" id="GO:0009401">
    <property type="term" value="P:phosphoenolpyruvate-dependent sugar phosphotransferase system"/>
    <property type="evidence" value="ECO:0007669"/>
    <property type="project" value="TreeGrafter"/>
</dbReference>
<dbReference type="FunFam" id="3.20.20.70:FF:000141">
    <property type="entry name" value="D-tagatose-1,6-bisphosphate aldolase subunit GatZ"/>
    <property type="match status" value="1"/>
</dbReference>
<dbReference type="Gene3D" id="3.20.20.70">
    <property type="entry name" value="Aldolase class I"/>
    <property type="match status" value="1"/>
</dbReference>
<dbReference type="Gene3D" id="1.10.400.20">
    <property type="entry name" value="putative tagatose 6-phosphate kinase domain like"/>
    <property type="match status" value="1"/>
</dbReference>
<dbReference type="HAMAP" id="MF_01296">
    <property type="entry name" value="Tagatose_aldol_GatZ"/>
    <property type="match status" value="1"/>
</dbReference>
<dbReference type="InterPro" id="IPR013785">
    <property type="entry name" value="Aldolase_TIM"/>
</dbReference>
<dbReference type="InterPro" id="IPR012062">
    <property type="entry name" value="GatZ/KbaZ-like"/>
</dbReference>
<dbReference type="InterPro" id="IPR050303">
    <property type="entry name" value="GatZ_KbaZ_carbometab"/>
</dbReference>
<dbReference type="InterPro" id="IPR023436">
    <property type="entry name" value="TagBP_ald_GatZ"/>
</dbReference>
<dbReference type="NCBIfam" id="TIGR02810">
    <property type="entry name" value="agaZ_gatZ"/>
    <property type="match status" value="1"/>
</dbReference>
<dbReference type="NCBIfam" id="NF011626">
    <property type="entry name" value="PRK15052.1"/>
    <property type="match status" value="1"/>
</dbReference>
<dbReference type="PANTHER" id="PTHR32502:SF12">
    <property type="entry name" value="D-TAGATOSE-1,6-BISPHOSPHATE ALDOLASE SUBUNIT GATZ"/>
    <property type="match status" value="1"/>
</dbReference>
<dbReference type="PANTHER" id="PTHR32502">
    <property type="entry name" value="N-ACETYLGALACTOSAMINE PERMEASE II COMPONENT-RELATED"/>
    <property type="match status" value="1"/>
</dbReference>
<dbReference type="Pfam" id="PF08013">
    <property type="entry name" value="GatZ_KbaZ-like"/>
    <property type="match status" value="1"/>
</dbReference>
<dbReference type="PIRSF" id="PIRSF009264">
    <property type="entry name" value="TagBP_ald_AgaZ"/>
    <property type="match status" value="1"/>
</dbReference>
<dbReference type="SUPFAM" id="SSF51569">
    <property type="entry name" value="Aldolase"/>
    <property type="match status" value="1"/>
</dbReference>
<reference key="1">
    <citation type="journal article" date="2006" name="Proc. Natl. Acad. Sci. U.S.A.">
        <title>Identification of genes subject to positive selection in uropathogenic strains of Escherichia coli: a comparative genomics approach.</title>
        <authorList>
            <person name="Chen S.L."/>
            <person name="Hung C.-S."/>
            <person name="Xu J."/>
            <person name="Reigstad C.S."/>
            <person name="Magrini V."/>
            <person name="Sabo A."/>
            <person name="Blasiar D."/>
            <person name="Bieri T."/>
            <person name="Meyer R.R."/>
            <person name="Ozersky P."/>
            <person name="Armstrong J.R."/>
            <person name="Fulton R.S."/>
            <person name="Latreille J.P."/>
            <person name="Spieth J."/>
            <person name="Hooton T.M."/>
            <person name="Mardis E.R."/>
            <person name="Hultgren S.J."/>
            <person name="Gordon J.I."/>
        </authorList>
    </citation>
    <scope>NUCLEOTIDE SEQUENCE [LARGE SCALE GENOMIC DNA]</scope>
    <source>
        <strain>UTI89 / UPEC</strain>
    </source>
</reference>
<protein>
    <recommendedName>
        <fullName evidence="1">D-tagatose-1,6-bisphosphate aldolase subunit GatZ</fullName>
    </recommendedName>
</protein>
<organism>
    <name type="scientific">Escherichia coli (strain UTI89 / UPEC)</name>
    <dbReference type="NCBI Taxonomy" id="364106"/>
    <lineage>
        <taxon>Bacteria</taxon>
        <taxon>Pseudomonadati</taxon>
        <taxon>Pseudomonadota</taxon>
        <taxon>Gammaproteobacteria</taxon>
        <taxon>Enterobacterales</taxon>
        <taxon>Enterobacteriaceae</taxon>
        <taxon>Escherichia</taxon>
    </lineage>
</organism>
<feature type="chain" id="PRO_0000372494" description="D-tagatose-1,6-bisphosphate aldolase subunit GatZ">
    <location>
        <begin position="1"/>
        <end position="420"/>
    </location>
</feature>
<proteinExistence type="inferred from homology"/>
<sequence length="420" mass="46940">MKTLIARHKAGEHIGICSVCSAHPLVIEAALAFDRNSTRKVLIEATSNQVNQFGGYTGMTPADFREFVFAIADKVGFARERIILGGDHLGPNCWQQENADAAMEKSVELVKAYVRAGFSKIHLDASMSCADDSIPLAPETVAERAAVLCLAAESVATDCQREQLNYVIGTEVPVPGGEASAIQSVHITQVEDAANTLRTHQKAFIARGLAEALTRVIAIVVQPGVEFDHSNIIHYQAQEAQALAQWIEKTKMVYEAHSTDYQTQTAYRELVRDHFAILKVGPALTFALREAIFALAQIEQELIAPENRSRCLAVIEEVMLDEPQYWKKYYRTGFNDSLLGIRYSLSDRIRYYWPHSRIKNSVETMMVNLEGVDIPLGMISQYLPKQFERIQSGELSAIPHQLIMDKIYDVLRAYRYGCAE</sequence>
<keyword id="KW-0298">Galactitol metabolism</keyword>
<gene>
    <name evidence="1" type="primary">gatZ</name>
    <name type="ordered locus">UTI89_C2368</name>
</gene>